<reference key="1">
    <citation type="journal article" date="2013" name="Toxins">
        <title>A proteomics and transcriptomics investigation of the venom from the barychelid spider Trittame loki (brush-foot trapdoor).</title>
        <authorList>
            <person name="Undheim E.A."/>
            <person name="Sunagar K."/>
            <person name="Herzig V."/>
            <person name="Kely L."/>
            <person name="Low D.H."/>
            <person name="Jackson T.N."/>
            <person name="Jones A."/>
            <person name="Kurniawan N."/>
            <person name="King G.F."/>
            <person name="Ali S.A."/>
            <person name="Antunes A."/>
            <person name="Ruder T."/>
            <person name="Fry B.G."/>
        </authorList>
    </citation>
    <scope>NUCLEOTIDE SEQUENCE [MRNA]</scope>
    <source>
        <tissue>Venom gland</tissue>
    </source>
</reference>
<protein>
    <recommendedName>
        <fullName>U12-barytoxin-Tl1a</fullName>
        <shortName>U12-BATX-Tl1a</shortName>
    </recommendedName>
    <alternativeName>
        <fullName evidence="3">Toxin ICK-6</fullName>
    </alternativeName>
</protein>
<comment type="function">
    <text evidence="4">Ion channel inhibitor.</text>
</comment>
<comment type="subcellular location">
    <subcellularLocation>
        <location evidence="1">Secreted</location>
    </subcellularLocation>
</comment>
<comment type="tissue specificity">
    <text evidence="4">Expressed by the venom gland.</text>
</comment>
<comment type="domain">
    <text evidence="1">The presence of a 'disulfide through disulfide knot' structurally defines this protein as a knottin.</text>
</comment>
<comment type="similarity">
    <text evidence="4">Belongs to the neurotoxin 14 (magi-1) family. 04 (ICK-6) subfamily.</text>
</comment>
<name>ICK6_TRILK</name>
<organism>
    <name type="scientific">Trittame loki</name>
    <name type="common">Brush-footed trapdoor spider</name>
    <dbReference type="NCBI Taxonomy" id="1295018"/>
    <lineage>
        <taxon>Eukaryota</taxon>
        <taxon>Metazoa</taxon>
        <taxon>Ecdysozoa</taxon>
        <taxon>Arthropoda</taxon>
        <taxon>Chelicerata</taxon>
        <taxon>Arachnida</taxon>
        <taxon>Araneae</taxon>
        <taxon>Mygalomorphae</taxon>
        <taxon>Barychelidae</taxon>
        <taxon>Trittame</taxon>
    </lineage>
</organism>
<proteinExistence type="evidence at transcript level"/>
<feature type="signal peptide" evidence="2">
    <location>
        <begin position="1"/>
        <end position="20"/>
    </location>
</feature>
<feature type="propeptide" id="PRO_0000435147" evidence="4">
    <location>
        <begin position="21"/>
        <end position="78"/>
    </location>
</feature>
<feature type="chain" id="PRO_0000429213" description="U12-barytoxin-Tl1a">
    <location>
        <begin position="79"/>
        <end position="124"/>
    </location>
</feature>
<feature type="disulfide bond" evidence="1">
    <location>
        <begin position="79"/>
        <end position="99"/>
    </location>
</feature>
<feature type="disulfide bond" evidence="1">
    <location>
        <begin position="86"/>
        <end position="104"/>
    </location>
</feature>
<feature type="disulfide bond" evidence="1">
    <location>
        <begin position="98"/>
        <end position="118"/>
    </location>
</feature>
<dbReference type="EMBL" id="GAQE01000009">
    <property type="protein sequence ID" value="JAB84545.1"/>
    <property type="molecule type" value="Transcribed_RNA"/>
</dbReference>
<dbReference type="SMR" id="W4VRV3"/>
<dbReference type="ArachnoServer" id="AS001698">
    <property type="toxin name" value="U12-barytoxin-Tl1a"/>
</dbReference>
<dbReference type="GO" id="GO:0005576">
    <property type="term" value="C:extracellular region"/>
    <property type="evidence" value="ECO:0007669"/>
    <property type="project" value="UniProtKB-SubCell"/>
</dbReference>
<dbReference type="GO" id="GO:0019871">
    <property type="term" value="F:sodium channel inhibitor activity"/>
    <property type="evidence" value="ECO:0007669"/>
    <property type="project" value="InterPro"/>
</dbReference>
<dbReference type="GO" id="GO:0090729">
    <property type="term" value="F:toxin activity"/>
    <property type="evidence" value="ECO:0007669"/>
    <property type="project" value="UniProtKB-KW"/>
</dbReference>
<dbReference type="InterPro" id="IPR012627">
    <property type="entry name" value="Toxin_22"/>
</dbReference>
<dbReference type="Pfam" id="PF08092">
    <property type="entry name" value="Toxin_22"/>
    <property type="match status" value="1"/>
</dbReference>
<keyword id="KW-0165">Cleavage on pair of basic residues</keyword>
<keyword id="KW-1015">Disulfide bond</keyword>
<keyword id="KW-0872">Ion channel impairing toxin</keyword>
<keyword id="KW-0960">Knottin</keyword>
<keyword id="KW-0964">Secreted</keyword>
<keyword id="KW-0732">Signal</keyword>
<keyword id="KW-0800">Toxin</keyword>
<accession>W4VRV3</accession>
<evidence type="ECO:0000250" key="1"/>
<evidence type="ECO:0000255" key="2"/>
<evidence type="ECO:0000303" key="3">
    <source>
    </source>
</evidence>
<evidence type="ECO:0000305" key="4"/>
<sequence>MKTMIAWLVLLTFAAALCFADEGLKQEHMNERKKSRFREDIPDEISEDLLLQEMEAMEAELLEKEMRMEENRNSREKRCLGEDISCGEKPGDLVRMPCCAKYECKETAGYWWYQKRFCVKKKSG</sequence>